<keyword id="KW-1185">Reference proteome</keyword>
<keyword id="KW-0677">Repeat</keyword>
<keyword id="KW-0853">WD repeat</keyword>
<protein>
    <recommendedName>
        <fullName>Putative BTB/POZ domain and WD-repeat protein R61</fullName>
    </recommendedName>
</protein>
<sequence length="496" mass="57581">MDSQQYNSNINLILNDEHHTETLNVDKKILIEKCEYFSRMLTQFSEINADTITIKVVDSNIAKNVIMSMFSDIDIYKNIGNCCDWKYLLLLYKCCDFFNISFDITKLNKLLVPNEGFELLLDIIDIIGYNYDMIELIINNLPKNYDLGKFPRELLETLYDHSTSYNIVSGSLDRTIKIWNVETQDFNSKIFTKLSKTLRYFPINKEQIFDNNIKCMDYSHKFNQIISGSNGGIKLWNIDNREVIKEFQCDYKINDICFSPDGKSCVCANKFLSIYDLDNGRRKVLNLTRIKSIGCIKTCVCWTSDNIIACGDSDGVIEFWNAETNLIIKWCQVSKSRISNISFSPDRSQIAVSNQTKIILYDSIFDKKILEIKNSYIINFAYSPTEDVLVLIDGYLIKLYNCRTGNLFRTFNLYDCSSQNTMYFSLQSKIHFSPTGNQIIFTCDTKNENLVGIWNWKLNDDIIYLKGHQKQITSLCIIPDSENSTNKRIMNMLKNQ</sequence>
<feature type="chain" id="PRO_0000186240" description="Putative BTB/POZ domain and WD-repeat protein R61">
    <location>
        <begin position="1"/>
        <end position="496"/>
    </location>
</feature>
<feature type="domain" description="BTB">
    <location>
        <begin position="8"/>
        <end position="78"/>
    </location>
</feature>
<feature type="repeat" description="WD 1">
    <location>
        <begin position="149"/>
        <end position="189"/>
    </location>
</feature>
<feature type="repeat" description="WD 2">
    <location>
        <begin position="208"/>
        <end position="248"/>
    </location>
</feature>
<feature type="repeat" description="WD 3">
    <location>
        <begin position="250"/>
        <end position="285"/>
    </location>
</feature>
<feature type="repeat" description="WD 4">
    <location>
        <begin position="291"/>
        <end position="330"/>
    </location>
</feature>
<feature type="repeat" description="WD 5">
    <location>
        <begin position="333"/>
        <end position="371"/>
    </location>
</feature>
<feature type="repeat" description="WD 6">
    <location>
        <begin position="422"/>
        <end position="464"/>
    </location>
</feature>
<comment type="similarity">
    <text evidence="1">Belongs to the mimivirus BTB/WD family.</text>
</comment>
<name>YR061_MIMIV</name>
<organismHost>
    <name type="scientific">Acanthamoeba polyphaga</name>
    <name type="common">Amoeba</name>
    <dbReference type="NCBI Taxonomy" id="5757"/>
</organismHost>
<reference key="1">
    <citation type="journal article" date="2004" name="Science">
        <title>The 1.2-megabase genome sequence of Mimivirus.</title>
        <authorList>
            <person name="Raoult D."/>
            <person name="Audic S."/>
            <person name="Robert C."/>
            <person name="Abergel C."/>
            <person name="Renesto P."/>
            <person name="Ogata H."/>
            <person name="La Scola B."/>
            <person name="Susan M."/>
            <person name="Claverie J.-M."/>
        </authorList>
    </citation>
    <scope>NUCLEOTIDE SEQUENCE [LARGE SCALE GENOMIC DNA]</scope>
    <source>
        <strain>Rowbotham-Bradford</strain>
    </source>
</reference>
<gene>
    <name type="ordered locus">MIMI_R61</name>
</gene>
<organism>
    <name type="scientific">Acanthamoeba polyphaga mimivirus</name>
    <name type="common">APMV</name>
    <dbReference type="NCBI Taxonomy" id="212035"/>
    <lineage>
        <taxon>Viruses</taxon>
        <taxon>Varidnaviria</taxon>
        <taxon>Bamfordvirae</taxon>
        <taxon>Nucleocytoviricota</taxon>
        <taxon>Megaviricetes</taxon>
        <taxon>Imitervirales</taxon>
        <taxon>Mimiviridae</taxon>
        <taxon>Megamimivirinae</taxon>
        <taxon>Mimivirus</taxon>
        <taxon>Mimivirus bradfordmassiliense</taxon>
    </lineage>
</organism>
<dbReference type="EMBL" id="AY653733">
    <property type="protein sequence ID" value="AAV50336.1"/>
    <property type="molecule type" value="Genomic_DNA"/>
</dbReference>
<dbReference type="SMR" id="Q5UPD3"/>
<dbReference type="KEGG" id="vg:9924650"/>
<dbReference type="OrthoDB" id="7868at10239"/>
<dbReference type="Proteomes" id="UP000001134">
    <property type="component" value="Genome"/>
</dbReference>
<dbReference type="Gene3D" id="2.130.10.10">
    <property type="entry name" value="YVTN repeat-like/Quinoprotein amine dehydrogenase"/>
    <property type="match status" value="3"/>
</dbReference>
<dbReference type="InterPro" id="IPR015943">
    <property type="entry name" value="WD40/YVTN_repeat-like_dom_sf"/>
</dbReference>
<dbReference type="InterPro" id="IPR019775">
    <property type="entry name" value="WD40_repeat_CS"/>
</dbReference>
<dbReference type="InterPro" id="IPR036322">
    <property type="entry name" value="WD40_repeat_dom_sf"/>
</dbReference>
<dbReference type="InterPro" id="IPR001680">
    <property type="entry name" value="WD40_rpt"/>
</dbReference>
<dbReference type="InterPro" id="IPR050349">
    <property type="entry name" value="WD_LIS1/nudF_dynein_reg"/>
</dbReference>
<dbReference type="PANTHER" id="PTHR44129">
    <property type="entry name" value="WD REPEAT-CONTAINING PROTEIN POP1"/>
    <property type="match status" value="1"/>
</dbReference>
<dbReference type="Pfam" id="PF00400">
    <property type="entry name" value="WD40"/>
    <property type="match status" value="2"/>
</dbReference>
<dbReference type="SMART" id="SM00320">
    <property type="entry name" value="WD40"/>
    <property type="match status" value="5"/>
</dbReference>
<dbReference type="SUPFAM" id="SSF50978">
    <property type="entry name" value="WD40 repeat-like"/>
    <property type="match status" value="1"/>
</dbReference>
<dbReference type="PROSITE" id="PS00678">
    <property type="entry name" value="WD_REPEATS_1"/>
    <property type="match status" value="1"/>
</dbReference>
<dbReference type="PROSITE" id="PS50082">
    <property type="entry name" value="WD_REPEATS_2"/>
    <property type="match status" value="1"/>
</dbReference>
<evidence type="ECO:0000305" key="1"/>
<accession>Q5UPD3</accession>
<proteinExistence type="inferred from homology"/>